<dbReference type="EC" id="2.7.10.2"/>
<dbReference type="EMBL" id="X13745">
    <property type="protein sequence ID" value="CAA32012.1"/>
    <property type="molecule type" value="Genomic_DNA"/>
</dbReference>
<dbReference type="PDB" id="2JYQ">
    <property type="method" value="NMR"/>
    <property type="chains" value="A=144-249"/>
</dbReference>
<dbReference type="PDB" id="7PVT">
    <property type="method" value="X-ray"/>
    <property type="resolution" value="1.60 A"/>
    <property type="chains" value="A/C=81-141"/>
</dbReference>
<dbReference type="PDBsum" id="2JYQ"/>
<dbReference type="PDBsum" id="7PVT"/>
<dbReference type="SMR" id="P63185"/>
<dbReference type="BindingDB" id="P63185"/>
<dbReference type="DrugBank" id="DB01773">
    <property type="generic name" value="4-[3-carboxymethyl-3-(4-phosphonooxy-benzyl)-ureido]-4-[(3-cyclohexyl-propyl)-methyl-carbamoyl]butyric acid"/>
</dbReference>
<dbReference type="EvolutionaryTrace" id="P63185"/>
<dbReference type="GO" id="GO:0005524">
    <property type="term" value="F:ATP binding"/>
    <property type="evidence" value="ECO:0007669"/>
    <property type="project" value="UniProtKB-KW"/>
</dbReference>
<dbReference type="GO" id="GO:0004715">
    <property type="term" value="F:non-membrane spanning protein tyrosine kinase activity"/>
    <property type="evidence" value="ECO:0007669"/>
    <property type="project" value="UniProtKB-EC"/>
</dbReference>
<dbReference type="CDD" id="cd10365">
    <property type="entry name" value="SH2_Src_Src"/>
    <property type="match status" value="1"/>
</dbReference>
<dbReference type="CDD" id="cd12008">
    <property type="entry name" value="SH3_Src"/>
    <property type="match status" value="1"/>
</dbReference>
<dbReference type="FunFam" id="1.10.510.10:FF:000553">
    <property type="entry name" value="Tyrosine-protein kinase"/>
    <property type="match status" value="1"/>
</dbReference>
<dbReference type="FunFam" id="3.30.200.20:FF:000016">
    <property type="entry name" value="Tyrosine-protein kinase"/>
    <property type="match status" value="1"/>
</dbReference>
<dbReference type="FunFam" id="3.30.505.10:FF:000001">
    <property type="entry name" value="Tyrosine-protein kinase"/>
    <property type="match status" value="1"/>
</dbReference>
<dbReference type="Gene3D" id="3.30.200.20">
    <property type="entry name" value="Phosphorylase Kinase, domain 1"/>
    <property type="match status" value="1"/>
</dbReference>
<dbReference type="Gene3D" id="3.30.505.10">
    <property type="entry name" value="SH2 domain"/>
    <property type="match status" value="1"/>
</dbReference>
<dbReference type="Gene3D" id="2.30.30.40">
    <property type="entry name" value="SH3 Domains"/>
    <property type="match status" value="1"/>
</dbReference>
<dbReference type="Gene3D" id="1.10.510.10">
    <property type="entry name" value="Transferase(Phosphotransferase) domain 1"/>
    <property type="match status" value="1"/>
</dbReference>
<dbReference type="InterPro" id="IPR011009">
    <property type="entry name" value="Kinase-like_dom_sf"/>
</dbReference>
<dbReference type="InterPro" id="IPR050198">
    <property type="entry name" value="Non-receptor_tyrosine_kinases"/>
</dbReference>
<dbReference type="InterPro" id="IPR000719">
    <property type="entry name" value="Prot_kinase_dom"/>
</dbReference>
<dbReference type="InterPro" id="IPR017441">
    <property type="entry name" value="Protein_kinase_ATP_BS"/>
</dbReference>
<dbReference type="InterPro" id="IPR001245">
    <property type="entry name" value="Ser-Thr/Tyr_kinase_cat_dom"/>
</dbReference>
<dbReference type="InterPro" id="IPR000980">
    <property type="entry name" value="SH2"/>
</dbReference>
<dbReference type="InterPro" id="IPR036860">
    <property type="entry name" value="SH2_dom_sf"/>
</dbReference>
<dbReference type="InterPro" id="IPR036028">
    <property type="entry name" value="SH3-like_dom_sf"/>
</dbReference>
<dbReference type="InterPro" id="IPR001452">
    <property type="entry name" value="SH3_domain"/>
</dbReference>
<dbReference type="InterPro" id="IPR008266">
    <property type="entry name" value="Tyr_kinase_AS"/>
</dbReference>
<dbReference type="InterPro" id="IPR020635">
    <property type="entry name" value="Tyr_kinase_cat_dom"/>
</dbReference>
<dbReference type="PANTHER" id="PTHR24418">
    <property type="entry name" value="TYROSINE-PROTEIN KINASE"/>
    <property type="match status" value="1"/>
</dbReference>
<dbReference type="Pfam" id="PF07714">
    <property type="entry name" value="PK_Tyr_Ser-Thr"/>
    <property type="match status" value="1"/>
</dbReference>
<dbReference type="Pfam" id="PF00017">
    <property type="entry name" value="SH2"/>
    <property type="match status" value="1"/>
</dbReference>
<dbReference type="Pfam" id="PF00018">
    <property type="entry name" value="SH3_1"/>
    <property type="match status" value="1"/>
</dbReference>
<dbReference type="PRINTS" id="PR00401">
    <property type="entry name" value="SH2DOMAIN"/>
</dbReference>
<dbReference type="PRINTS" id="PR00452">
    <property type="entry name" value="SH3DOMAIN"/>
</dbReference>
<dbReference type="PRINTS" id="PR00109">
    <property type="entry name" value="TYRKINASE"/>
</dbReference>
<dbReference type="SMART" id="SM00252">
    <property type="entry name" value="SH2"/>
    <property type="match status" value="1"/>
</dbReference>
<dbReference type="SMART" id="SM00326">
    <property type="entry name" value="SH3"/>
    <property type="match status" value="1"/>
</dbReference>
<dbReference type="SMART" id="SM00219">
    <property type="entry name" value="TyrKc"/>
    <property type="match status" value="1"/>
</dbReference>
<dbReference type="SUPFAM" id="SSF56112">
    <property type="entry name" value="Protein kinase-like (PK-like)"/>
    <property type="match status" value="1"/>
</dbReference>
<dbReference type="SUPFAM" id="SSF55550">
    <property type="entry name" value="SH2 domain"/>
    <property type="match status" value="1"/>
</dbReference>
<dbReference type="SUPFAM" id="SSF50044">
    <property type="entry name" value="SH3-domain"/>
    <property type="match status" value="1"/>
</dbReference>
<dbReference type="PROSITE" id="PS00107">
    <property type="entry name" value="PROTEIN_KINASE_ATP"/>
    <property type="match status" value="1"/>
</dbReference>
<dbReference type="PROSITE" id="PS50011">
    <property type="entry name" value="PROTEIN_KINASE_DOM"/>
    <property type="match status" value="1"/>
</dbReference>
<dbReference type="PROSITE" id="PS00109">
    <property type="entry name" value="PROTEIN_KINASE_TYR"/>
    <property type="match status" value="1"/>
</dbReference>
<dbReference type="PROSITE" id="PS50001">
    <property type="entry name" value="SH2"/>
    <property type="match status" value="1"/>
</dbReference>
<dbReference type="PROSITE" id="PS50002">
    <property type="entry name" value="SH3"/>
    <property type="match status" value="1"/>
</dbReference>
<protein>
    <recommendedName>
        <fullName>Tyrosine-protein kinase transforming protein Src</fullName>
        <ecNumber>2.7.10.2</ecNumber>
    </recommendedName>
    <alternativeName>
        <fullName>pp60v-src</fullName>
        <shortName>p60-Src</shortName>
        <shortName>v-Src</shortName>
    </alternativeName>
</protein>
<gene>
    <name type="primary">V-SRC</name>
</gene>
<sequence>MGSSKSKPKGPSQRRRSLEPPDSTHHGGFPASQTPNKTAAPDTHRTPSRSFGTVATEPKLFGDFNTSDTVTSPQRAGALAGGVTTFVALYDYESWIETDLSFKKGERLQIVNNTEGNWWLAHSVTTGQTGYIPSNYVAPSDSIQAEEWYFGKITRRESERLLLNPENPRGTFLVRESETTKGAYCLSVSDFDNAKGLNVKHYKIRKLDSGGFYITSRTQFSSLQQLVAYYSKHADGLCHRLTNVCPTSKPQTQGLAKDAWEIPRESLRLEVKLGQGCFGEVWMGTWNGTTRVAIKTLKPGTMSPEAFLQEAQVMKKLRHKKLVQLYAVVSEEPIYIVIEYMSKGSLLDFLKGEMGKYLRLPQLVDMAAQIASGMAYVERMNYVHRDLRAANILVGENLVCKVADFGLARLIEDNEYTARQGAKFPIKWTAPEAALYGRFTIKSDVWSFGILLTELTTKGRVPYPGMGNGEVLDRVERGYRMPCPPECPESLHDLMSQCWRRDPEERPTFEYLQAQLLPACVLEVAE</sequence>
<proteinExistence type="evidence at protein level"/>
<reference key="1">
    <citation type="journal article" date="1989" name="Nucleic Acids Res.">
        <title>Nucleotide sequence of the src gene of the Schmidt-Ruppin strain of Rous sarcoma virus type E.</title>
        <authorList>
            <person name="Barnier J.V."/>
            <person name="Dezelee P."/>
            <person name="Marx M."/>
            <person name="Calothy G."/>
        </authorList>
    </citation>
    <scope>NUCLEOTIDE SEQUENCE [GENOMIC DNA]</scope>
</reference>
<keyword id="KW-0002">3D-structure</keyword>
<keyword id="KW-0067">ATP-binding</keyword>
<keyword id="KW-0418">Kinase</keyword>
<keyword id="KW-0449">Lipoprotein</keyword>
<keyword id="KW-0519">Myristate</keyword>
<keyword id="KW-0547">Nucleotide-binding</keyword>
<keyword id="KW-0553">Oncogene</keyword>
<keyword id="KW-0597">Phosphoprotein</keyword>
<keyword id="KW-0727">SH2 domain</keyword>
<keyword id="KW-0728">SH3 domain</keyword>
<keyword id="KW-0808">Transferase</keyword>
<keyword id="KW-0829">Tyrosine-protein kinase</keyword>
<evidence type="ECO:0000250" key="1"/>
<evidence type="ECO:0000255" key="2">
    <source>
        <dbReference type="PROSITE-ProRule" id="PRU00159"/>
    </source>
</evidence>
<evidence type="ECO:0000255" key="3">
    <source>
        <dbReference type="PROSITE-ProRule" id="PRU00191"/>
    </source>
</evidence>
<evidence type="ECO:0000255" key="4">
    <source>
        <dbReference type="PROSITE-ProRule" id="PRU00192"/>
    </source>
</evidence>
<evidence type="ECO:0000255" key="5">
    <source>
        <dbReference type="PROSITE-ProRule" id="PRU10028"/>
    </source>
</evidence>
<evidence type="ECO:0000256" key="6">
    <source>
        <dbReference type="SAM" id="MobiDB-lite"/>
    </source>
</evidence>
<evidence type="ECO:0007829" key="7">
    <source>
        <dbReference type="PDB" id="2JYQ"/>
    </source>
</evidence>
<evidence type="ECO:0007829" key="8">
    <source>
        <dbReference type="PDB" id="7PVT"/>
    </source>
</evidence>
<accession>P63185</accession>
<name>SRC_RSVSE</name>
<comment type="function">
    <text evidence="1">This phosphoprotein, required for both the initiation and the maintenance of neoplastic transformation, is a protein kinase that catalyzes the phosphorylation of tyrosine residues in vitro.</text>
</comment>
<comment type="catalytic activity">
    <reaction evidence="5">
        <text>L-tyrosyl-[protein] + ATP = O-phospho-L-tyrosyl-[protein] + ADP + H(+)</text>
        <dbReference type="Rhea" id="RHEA:10596"/>
        <dbReference type="Rhea" id="RHEA-COMP:10136"/>
        <dbReference type="Rhea" id="RHEA-COMP:20101"/>
        <dbReference type="ChEBI" id="CHEBI:15378"/>
        <dbReference type="ChEBI" id="CHEBI:30616"/>
        <dbReference type="ChEBI" id="CHEBI:46858"/>
        <dbReference type="ChEBI" id="CHEBI:61978"/>
        <dbReference type="ChEBI" id="CHEBI:456216"/>
        <dbReference type="EC" id="2.7.10.2"/>
    </reaction>
</comment>
<comment type="subunit">
    <text evidence="1">Homodimer.</text>
</comment>
<comment type="PTM">
    <text>The phosphorylated form is termed pp60v-src.</text>
</comment>
<comment type="similarity">
    <text evidence="2">Belongs to the protein kinase superfamily. Tyr protein kinase family. SRC subfamily.</text>
</comment>
<organism>
    <name type="scientific">Rous sarcoma virus subgroup E (strain Schmidt-Ruppin)</name>
    <name type="common">RSV-SR-E</name>
    <dbReference type="NCBI Taxonomy" id="270623"/>
    <lineage>
        <taxon>Viruses</taxon>
        <taxon>Riboviria</taxon>
        <taxon>Pararnavirae</taxon>
        <taxon>Artverviricota</taxon>
        <taxon>Revtraviricetes</taxon>
        <taxon>Ortervirales</taxon>
        <taxon>Retroviridae</taxon>
        <taxon>Orthoretrovirinae</taxon>
        <taxon>Alpharetrovirus</taxon>
        <taxon>Rous sarcoma virus</taxon>
    </lineage>
</organism>
<feature type="initiator methionine" description="Removed; by host" evidence="1">
    <location>
        <position position="1"/>
    </location>
</feature>
<feature type="chain" id="PRO_0000088154" description="Tyrosine-protein kinase transforming protein Src">
    <location>
        <begin position="2"/>
        <end position="526"/>
    </location>
</feature>
<feature type="domain" description="SH3" evidence="4">
    <location>
        <begin position="81"/>
        <end position="142"/>
    </location>
</feature>
<feature type="domain" description="SH2" evidence="3">
    <location>
        <begin position="148"/>
        <end position="245"/>
    </location>
</feature>
<feature type="domain" description="Protein kinase" evidence="2">
    <location>
        <begin position="267"/>
        <end position="517"/>
    </location>
</feature>
<feature type="region of interest" description="Disordered" evidence="6">
    <location>
        <begin position="1"/>
        <end position="59"/>
    </location>
</feature>
<feature type="compositionally biased region" description="Basic residues" evidence="6">
    <location>
        <begin position="1"/>
        <end position="15"/>
    </location>
</feature>
<feature type="compositionally biased region" description="Basic and acidic residues" evidence="6">
    <location>
        <begin position="16"/>
        <end position="25"/>
    </location>
</feature>
<feature type="active site" description="Proton acceptor" evidence="2 5">
    <location>
        <position position="386"/>
    </location>
</feature>
<feature type="binding site" evidence="2">
    <location>
        <begin position="273"/>
        <end position="281"/>
    </location>
    <ligand>
        <name>ATP</name>
        <dbReference type="ChEBI" id="CHEBI:30616"/>
    </ligand>
</feature>
<feature type="binding site" evidence="2">
    <location>
        <position position="295"/>
    </location>
    <ligand>
        <name>ATP</name>
        <dbReference type="ChEBI" id="CHEBI:30616"/>
    </ligand>
</feature>
<feature type="modified residue" description="Phosphotyrosine; by autocatalysis" evidence="1">
    <location>
        <position position="416"/>
    </location>
</feature>
<feature type="lipid moiety-binding region" description="N-myristoyl glycine; by host" evidence="1">
    <location>
        <position position="2"/>
    </location>
</feature>
<feature type="strand" evidence="8">
    <location>
        <begin position="85"/>
        <end position="90"/>
    </location>
</feature>
<feature type="strand" evidence="8">
    <location>
        <begin position="107"/>
        <end position="110"/>
    </location>
</feature>
<feature type="strand" evidence="8">
    <location>
        <begin position="118"/>
        <end position="122"/>
    </location>
</feature>
<feature type="turn" evidence="8">
    <location>
        <begin position="124"/>
        <end position="126"/>
    </location>
</feature>
<feature type="strand" evidence="8">
    <location>
        <begin position="129"/>
        <end position="133"/>
    </location>
</feature>
<feature type="helix" evidence="8">
    <location>
        <begin position="134"/>
        <end position="136"/>
    </location>
</feature>
<feature type="strand" evidence="8">
    <location>
        <begin position="137"/>
        <end position="139"/>
    </location>
</feature>
<feature type="strand" evidence="7">
    <location>
        <begin position="149"/>
        <end position="152"/>
    </location>
</feature>
<feature type="helix" evidence="7">
    <location>
        <begin position="155"/>
        <end position="162"/>
    </location>
</feature>
<feature type="strand" evidence="7">
    <location>
        <begin position="171"/>
        <end position="176"/>
    </location>
</feature>
<feature type="strand" evidence="7">
    <location>
        <begin position="178"/>
        <end position="180"/>
    </location>
</feature>
<feature type="strand" evidence="7">
    <location>
        <begin position="184"/>
        <end position="192"/>
    </location>
</feature>
<feature type="turn" evidence="7">
    <location>
        <begin position="193"/>
        <end position="195"/>
    </location>
</feature>
<feature type="strand" evidence="7">
    <location>
        <begin position="196"/>
        <end position="206"/>
    </location>
</feature>
<feature type="strand" evidence="7">
    <location>
        <begin position="212"/>
        <end position="217"/>
    </location>
</feature>
<feature type="strand" evidence="7">
    <location>
        <begin position="220"/>
        <end position="222"/>
    </location>
</feature>
<feature type="helix" evidence="7">
    <location>
        <begin position="223"/>
        <end position="230"/>
    </location>
</feature>
<feature type="strand" evidence="7">
    <location>
        <begin position="237"/>
        <end position="239"/>
    </location>
</feature>
<organismHost>
    <name type="scientific">Gallus gallus</name>
    <name type="common">Chicken</name>
    <dbReference type="NCBI Taxonomy" id="9031"/>
</organismHost>